<protein>
    <recommendedName>
        <fullName>Transcription factor PRE1</fullName>
    </recommendedName>
    <alternativeName>
        <fullName>Basic helix-loop-helix protein 136</fullName>
        <shortName>AtbHLH136</shortName>
        <shortName>bHLH 136</shortName>
    </alternativeName>
    <alternativeName>
        <fullName>Protein BANQUO 1</fullName>
    </alternativeName>
    <alternativeName>
        <fullName>Protein PACLOBUTRAZOL RESISTANCE 1</fullName>
    </alternativeName>
    <alternativeName>
        <fullName>bHLH transcription factor bHLH136</fullName>
    </alternativeName>
</protein>
<proteinExistence type="evidence at protein level"/>
<comment type="function">
    <text evidence="2 3 4 5 6">Atypical and probable non DNA-binding bHLH transcription factor that integrates multiple signaling pathways to regulate cell elongation and plant development. Binds IBH1, forming a pair of antagonistic bHLH transcription factors that function downstream of BZR1 to mediate brassinosteroid regulation of cell elongation. Regulates light responses by binding and inhibiting the activity of the bHLH transcription factor HFR1, a critical regulator of light signaling and shade avoidance. May have a regulatory role in various aspects of gibberellin-dependent growth and development.</text>
</comment>
<comment type="subunit">
    <text evidence="3 4 5 6">Interacts with IBH1 and HFR1.</text>
</comment>
<comment type="subcellular location">
    <subcellularLocation>
        <location evidence="7">Nucleus</location>
    </subcellularLocation>
</comment>
<comment type="tissue specificity">
    <text evidence="2">Expressed in roots, leaves, stems and flowers.</text>
</comment>
<comment type="induction">
    <text evidence="2 3">By gibberellin and epibrassinolide.</text>
</comment>
<comment type="miscellaneous">
    <text evidence="8 9 10">Gain-of-function mutants (T-DNA tagging) show long hypocotyls, pale green and slightly narrow leaves, elongated petioles and early flowering. They are not sensitive to the gibberellin inhibitor paclobutrazol during seed germination (PubMed:16527868, PubMed:20009022, PubMed:23221598).</text>
</comment>
<gene>
    <name type="primary">PRE1</name>
    <name type="synonym">BHLH136</name>
    <name type="synonym">BNQ1</name>
    <name type="ordered locus">At5g39860</name>
    <name type="ORF">MYH19.1</name>
</gene>
<dbReference type="EMBL" id="AB010077">
    <property type="protein sequence ID" value="BAB10210.1"/>
    <property type="molecule type" value="Genomic_DNA"/>
</dbReference>
<dbReference type="EMBL" id="CP002688">
    <property type="protein sequence ID" value="AED94484.1"/>
    <property type="molecule type" value="Genomic_DNA"/>
</dbReference>
<dbReference type="EMBL" id="AY088246">
    <property type="protein sequence ID" value="AAM65786.1"/>
    <property type="molecule type" value="mRNA"/>
</dbReference>
<dbReference type="RefSeq" id="NP_198802.1">
    <property type="nucleotide sequence ID" value="NM_123349.3"/>
</dbReference>
<dbReference type="SMR" id="Q9FLE9"/>
<dbReference type="BioGRID" id="19233">
    <property type="interactions" value="9"/>
</dbReference>
<dbReference type="FunCoup" id="Q9FLE9">
    <property type="interactions" value="111"/>
</dbReference>
<dbReference type="IntAct" id="Q9FLE9">
    <property type="interactions" value="7"/>
</dbReference>
<dbReference type="STRING" id="3702.Q9FLE9"/>
<dbReference type="iPTMnet" id="Q9FLE9"/>
<dbReference type="PaxDb" id="3702-AT5G39860.1"/>
<dbReference type="ProteomicsDB" id="234803"/>
<dbReference type="EnsemblPlants" id="AT5G39860.1">
    <property type="protein sequence ID" value="AT5G39860.1"/>
    <property type="gene ID" value="AT5G39860"/>
</dbReference>
<dbReference type="GeneID" id="833982"/>
<dbReference type="Gramene" id="AT5G39860.1">
    <property type="protein sequence ID" value="AT5G39860.1"/>
    <property type="gene ID" value="AT5G39860"/>
</dbReference>
<dbReference type="KEGG" id="ath:AT5G39860"/>
<dbReference type="Araport" id="AT5G39860"/>
<dbReference type="TAIR" id="AT5G39860">
    <property type="gene designation" value="PRE1"/>
</dbReference>
<dbReference type="eggNOG" id="ENOG502S648">
    <property type="taxonomic scope" value="Eukaryota"/>
</dbReference>
<dbReference type="HOGENOM" id="CLU_183267_0_0_1"/>
<dbReference type="InParanoid" id="Q9FLE9"/>
<dbReference type="OMA" id="PRISDNQ"/>
<dbReference type="OrthoDB" id="988630at2759"/>
<dbReference type="PhylomeDB" id="Q9FLE9"/>
<dbReference type="PRO" id="PR:Q9FLE9"/>
<dbReference type="Proteomes" id="UP000006548">
    <property type="component" value="Chromosome 5"/>
</dbReference>
<dbReference type="ExpressionAtlas" id="Q9FLE9">
    <property type="expression patterns" value="baseline and differential"/>
</dbReference>
<dbReference type="GO" id="GO:0005634">
    <property type="term" value="C:nucleus"/>
    <property type="evidence" value="ECO:0007669"/>
    <property type="project" value="UniProtKB-SubCell"/>
</dbReference>
<dbReference type="GO" id="GO:0003700">
    <property type="term" value="F:DNA-binding transcription factor activity"/>
    <property type="evidence" value="ECO:0000250"/>
    <property type="project" value="TAIR"/>
</dbReference>
<dbReference type="GO" id="GO:0046983">
    <property type="term" value="F:protein dimerization activity"/>
    <property type="evidence" value="ECO:0007669"/>
    <property type="project" value="InterPro"/>
</dbReference>
<dbReference type="GO" id="GO:0009742">
    <property type="term" value="P:brassinosteroid mediated signaling pathway"/>
    <property type="evidence" value="ECO:0007669"/>
    <property type="project" value="UniProtKB-KW"/>
</dbReference>
<dbReference type="GO" id="GO:0009740">
    <property type="term" value="P:gibberellic acid mediated signaling pathway"/>
    <property type="evidence" value="ECO:0007669"/>
    <property type="project" value="UniProtKB-KW"/>
</dbReference>
<dbReference type="GO" id="GO:0009640">
    <property type="term" value="P:photomorphogenesis"/>
    <property type="evidence" value="ECO:0000315"/>
    <property type="project" value="TAIR"/>
</dbReference>
<dbReference type="GO" id="GO:0040008">
    <property type="term" value="P:regulation of growth"/>
    <property type="evidence" value="ECO:0007669"/>
    <property type="project" value="InterPro"/>
</dbReference>
<dbReference type="GO" id="GO:0048510">
    <property type="term" value="P:regulation of timing of transition from vegetative to reproductive phase"/>
    <property type="evidence" value="ECO:0000315"/>
    <property type="project" value="TAIR"/>
</dbReference>
<dbReference type="GO" id="GO:0009741">
    <property type="term" value="P:response to brassinosteroid"/>
    <property type="evidence" value="ECO:0000270"/>
    <property type="project" value="TAIR"/>
</dbReference>
<dbReference type="GO" id="GO:0009826">
    <property type="term" value="P:unidimensional cell growth"/>
    <property type="evidence" value="ECO:0000315"/>
    <property type="project" value="TAIR"/>
</dbReference>
<dbReference type="CDD" id="cd11442">
    <property type="entry name" value="bHLH_AtPRE_like"/>
    <property type="match status" value="1"/>
</dbReference>
<dbReference type="FunFam" id="4.10.280.10:FF:000082">
    <property type="entry name" value="Transcription factor ILI6"/>
    <property type="match status" value="1"/>
</dbReference>
<dbReference type="Gene3D" id="4.10.280.10">
    <property type="entry name" value="Helix-loop-helix DNA-binding domain"/>
    <property type="match status" value="1"/>
</dbReference>
<dbReference type="InterPro" id="IPR011598">
    <property type="entry name" value="bHLH_dom"/>
</dbReference>
<dbReference type="InterPro" id="IPR036638">
    <property type="entry name" value="HLH_DNA-bd_sf"/>
</dbReference>
<dbReference type="InterPro" id="IPR044293">
    <property type="entry name" value="PRE"/>
</dbReference>
<dbReference type="PANTHER" id="PTHR46446">
    <property type="entry name" value="TRANSCRIPTION FACTOR PRE"/>
    <property type="match status" value="1"/>
</dbReference>
<dbReference type="PANTHER" id="PTHR46446:SF30">
    <property type="entry name" value="TRANSCRIPTION FACTOR PRE1"/>
    <property type="match status" value="1"/>
</dbReference>
<dbReference type="Pfam" id="PF23174">
    <property type="entry name" value="bHLH_ILI"/>
    <property type="match status" value="1"/>
</dbReference>
<dbReference type="SUPFAM" id="SSF47459">
    <property type="entry name" value="HLH, helix-loop-helix DNA-binding domain"/>
    <property type="match status" value="1"/>
</dbReference>
<dbReference type="PROSITE" id="PS50888">
    <property type="entry name" value="BHLH"/>
    <property type="match status" value="1"/>
</dbReference>
<sequence length="92" mass="10515">MSNRRSRQSSSAPRISDNQMIDLVSKLRQILPEIGQRRRSDKASASKVLQETCNYIRNLNREVDNLSERLSQLLESVDEDSPEAAVIRSLLM</sequence>
<name>PRE1_ARATH</name>
<feature type="chain" id="PRO_0000429083" description="Transcription factor PRE1">
    <location>
        <begin position="1"/>
        <end position="92"/>
    </location>
</feature>
<feature type="domain" description="bHLH" evidence="1">
    <location>
        <begin position="4"/>
        <end position="59"/>
    </location>
</feature>
<reference key="1">
    <citation type="journal article" date="1998" name="DNA Res.">
        <title>Structural analysis of Arabidopsis thaliana chromosome 5. IV. Sequence features of the regions of 1,456,315 bp covered by nineteen physically assigned P1 and TAC clones.</title>
        <authorList>
            <person name="Sato S."/>
            <person name="Kaneko T."/>
            <person name="Kotani H."/>
            <person name="Nakamura Y."/>
            <person name="Asamizu E."/>
            <person name="Miyajima N."/>
            <person name="Tabata S."/>
        </authorList>
    </citation>
    <scope>NUCLEOTIDE SEQUENCE [LARGE SCALE GENOMIC DNA]</scope>
    <source>
        <strain>cv. Columbia</strain>
    </source>
</reference>
<reference key="2">
    <citation type="journal article" date="2017" name="Plant J.">
        <title>Araport11: a complete reannotation of the Arabidopsis thaliana reference genome.</title>
        <authorList>
            <person name="Cheng C.Y."/>
            <person name="Krishnakumar V."/>
            <person name="Chan A.P."/>
            <person name="Thibaud-Nissen F."/>
            <person name="Schobel S."/>
            <person name="Town C.D."/>
        </authorList>
    </citation>
    <scope>GENOME REANNOTATION</scope>
    <source>
        <strain>cv. Columbia</strain>
    </source>
</reference>
<reference key="3">
    <citation type="submission" date="2002-03" db="EMBL/GenBank/DDBJ databases">
        <title>Full-length cDNA from Arabidopsis thaliana.</title>
        <authorList>
            <person name="Brover V.V."/>
            <person name="Troukhan M.E."/>
            <person name="Alexandrov N.A."/>
            <person name="Lu Y.-P."/>
            <person name="Flavell R.B."/>
            <person name="Feldmann K.A."/>
        </authorList>
    </citation>
    <scope>NUCLEOTIDE SEQUENCE [LARGE SCALE MRNA]</scope>
</reference>
<reference key="4">
    <citation type="journal article" date="2003" name="Plant Cell">
        <title>Update on the basic helix-loop-helix transcription factor gene family in Arabidopsis thaliana.</title>
        <authorList>
            <person name="Bailey P.C."/>
            <person name="Martin C."/>
            <person name="Toledo-Ortiz G."/>
            <person name="Quail P.H."/>
            <person name="Huq E."/>
            <person name="Heim M.A."/>
            <person name="Jakoby M."/>
            <person name="Werber M."/>
            <person name="Weisshaar B."/>
        </authorList>
    </citation>
    <scope>GENE FAMILY</scope>
    <scope>NOMENCLATURE</scope>
</reference>
<reference key="5">
    <citation type="journal article" date="2006" name="Plant Cell Physiol.">
        <title>Overexpression of PRE1 and its homologous genes activates gibberellin-dependent responses in Arabidopsis thaliana.</title>
        <authorList>
            <person name="Lee S."/>
            <person name="Lee S."/>
            <person name="Yang K.Y."/>
            <person name="Kim Y.M."/>
            <person name="Park S.Y."/>
            <person name="Kim S.Y."/>
            <person name="Soh M.S."/>
        </authorList>
    </citation>
    <scope>FUNCTION</scope>
    <scope>TISSUE SPECIFICITY</scope>
    <scope>INDUCTION BY GIBBERELLIN</scope>
</reference>
<reference key="6">
    <citation type="journal article" date="2009" name="Plant Cell">
        <title>Antagonistic HLH/bHLH transcription factors mediate brassinosteroid regulation of cell elongation and plant development in rice and Arabidopsis.</title>
        <authorList>
            <person name="Zhang L.Y."/>
            <person name="Bai M.Y."/>
            <person name="Wu J."/>
            <person name="Zhu J.Y."/>
            <person name="Wang H."/>
            <person name="Zhang Z."/>
            <person name="Wang W."/>
            <person name="Sun Y."/>
            <person name="Zhao J."/>
            <person name="Sun X."/>
            <person name="Yang H."/>
            <person name="Xu Y."/>
            <person name="Kim S.H."/>
            <person name="Fujioka S."/>
            <person name="Lin W.H."/>
            <person name="Chong K."/>
            <person name="Lu T."/>
            <person name="Wang Z.Y."/>
        </authorList>
    </citation>
    <scope>FUNCTION</scope>
    <scope>INTERACTION WITH IBH1</scope>
    <scope>INDUCTION BY EPIBRASSINOLIDE</scope>
</reference>
<reference key="7">
    <citation type="journal article" date="2010" name="Plant Cell">
        <title>The Arabidopsis floral homeotic proteins APETALA3 and PISTILLATA negatively regulate the BANQUO genes implicated in light signaling.</title>
        <authorList>
            <person name="Mara C.D."/>
            <person name="Huang T."/>
            <person name="Irish V.F."/>
        </authorList>
    </citation>
    <scope>FUNCTION</scope>
    <scope>INTERACTION WITH HFR1</scope>
</reference>
<reference key="8">
    <citation type="journal article" date="2012" name="Plant Cell">
        <title>A triantagonistic basic helix-loop-helix system regulates cell elongation in Arabidopsis.</title>
        <authorList>
            <person name="Ikeda M."/>
            <person name="Fujiwara S."/>
            <person name="Mitsuda N."/>
            <person name="Ohme-Takagi M."/>
        </authorList>
    </citation>
    <scope>FUNCTION</scope>
    <scope>INTERACTION WITH IBH1</scope>
</reference>
<reference key="9">
    <citation type="journal article" date="2012" name="Plant Cell">
        <title>A triple helix-loop-helix/basic helix-loop-helix cascade controls cell elongation downstream of multiple hormonal and environmental signaling pathways in Arabidopsis.</title>
        <authorList>
            <person name="Bai M.Y."/>
            <person name="Fan M."/>
            <person name="Oh E."/>
            <person name="Wang Z.Y."/>
        </authorList>
    </citation>
    <scope>FUNCTION</scope>
    <scope>INTERACTION WITH IBH1</scope>
</reference>
<organism>
    <name type="scientific">Arabidopsis thaliana</name>
    <name type="common">Mouse-ear cress</name>
    <dbReference type="NCBI Taxonomy" id="3702"/>
    <lineage>
        <taxon>Eukaryota</taxon>
        <taxon>Viridiplantae</taxon>
        <taxon>Streptophyta</taxon>
        <taxon>Embryophyta</taxon>
        <taxon>Tracheophyta</taxon>
        <taxon>Spermatophyta</taxon>
        <taxon>Magnoliopsida</taxon>
        <taxon>eudicotyledons</taxon>
        <taxon>Gunneridae</taxon>
        <taxon>Pentapetalae</taxon>
        <taxon>rosids</taxon>
        <taxon>malvids</taxon>
        <taxon>Brassicales</taxon>
        <taxon>Brassicaceae</taxon>
        <taxon>Camelineae</taxon>
        <taxon>Arabidopsis</taxon>
    </lineage>
</organism>
<evidence type="ECO:0000255" key="1">
    <source>
        <dbReference type="PROSITE-ProRule" id="PRU00981"/>
    </source>
</evidence>
<evidence type="ECO:0000269" key="2">
    <source>
    </source>
</evidence>
<evidence type="ECO:0000269" key="3">
    <source>
    </source>
</evidence>
<evidence type="ECO:0000269" key="4">
    <source>
    </source>
</evidence>
<evidence type="ECO:0000269" key="5">
    <source>
    </source>
</evidence>
<evidence type="ECO:0000269" key="6">
    <source>
    </source>
</evidence>
<evidence type="ECO:0000305" key="7"/>
<evidence type="ECO:0000305" key="8">
    <source>
    </source>
</evidence>
<evidence type="ECO:0000305" key="9">
    <source>
    </source>
</evidence>
<evidence type="ECO:0000305" key="10">
    <source>
    </source>
</evidence>
<accession>Q9FLE9</accession>
<keyword id="KW-1070">Brassinosteroid signaling pathway</keyword>
<keyword id="KW-0939">Gibberellin signaling pathway</keyword>
<keyword id="KW-0341">Growth regulation</keyword>
<keyword id="KW-0539">Nucleus</keyword>
<keyword id="KW-1185">Reference proteome</keyword>
<keyword id="KW-0804">Transcription</keyword>
<keyword id="KW-0805">Transcription regulation</keyword>